<keyword id="KW-0067">ATP-binding</keyword>
<keyword id="KW-0963">Cytoplasm</keyword>
<keyword id="KW-0227">DNA damage</keyword>
<keyword id="KW-0228">DNA excision</keyword>
<keyword id="KW-0234">DNA repair</keyword>
<keyword id="KW-0267">Excision nuclease</keyword>
<keyword id="KW-0347">Helicase</keyword>
<keyword id="KW-0378">Hydrolase</keyword>
<keyword id="KW-0547">Nucleotide-binding</keyword>
<keyword id="KW-1185">Reference proteome</keyword>
<keyword id="KW-0742">SOS response</keyword>
<proteinExistence type="inferred from homology"/>
<organism>
    <name type="scientific">Fervidobacterium nodosum (strain ATCC 35602 / DSM 5306 / Rt17-B1)</name>
    <dbReference type="NCBI Taxonomy" id="381764"/>
    <lineage>
        <taxon>Bacteria</taxon>
        <taxon>Thermotogati</taxon>
        <taxon>Thermotogota</taxon>
        <taxon>Thermotogae</taxon>
        <taxon>Thermotogales</taxon>
        <taxon>Fervidobacteriaceae</taxon>
        <taxon>Fervidobacterium</taxon>
    </lineage>
</organism>
<name>UVRB_FERNB</name>
<gene>
    <name evidence="1" type="primary">uvrB</name>
    <name type="ordered locus">Fnod_0489</name>
</gene>
<accession>A7HKC0</accession>
<feature type="chain" id="PRO_1000099552" description="UvrABC system protein B">
    <location>
        <begin position="1"/>
        <end position="661"/>
    </location>
</feature>
<feature type="domain" description="Helicase ATP-binding" evidence="1">
    <location>
        <begin position="24"/>
        <end position="209"/>
    </location>
</feature>
<feature type="domain" description="Helicase C-terminal" evidence="1">
    <location>
        <begin position="430"/>
        <end position="594"/>
    </location>
</feature>
<feature type="domain" description="UVR" evidence="1">
    <location>
        <begin position="622"/>
        <end position="657"/>
    </location>
</feature>
<feature type="short sequence motif" description="Beta-hairpin">
    <location>
        <begin position="90"/>
        <end position="113"/>
    </location>
</feature>
<feature type="binding site" evidence="1">
    <location>
        <begin position="37"/>
        <end position="44"/>
    </location>
    <ligand>
        <name>ATP</name>
        <dbReference type="ChEBI" id="CHEBI:30616"/>
    </ligand>
</feature>
<reference key="1">
    <citation type="submission" date="2007-07" db="EMBL/GenBank/DDBJ databases">
        <title>Complete sequence of Fervidobacterium nodosum Rt17-B1.</title>
        <authorList>
            <consortium name="US DOE Joint Genome Institute"/>
            <person name="Copeland A."/>
            <person name="Lucas S."/>
            <person name="Lapidus A."/>
            <person name="Barry K."/>
            <person name="Glavina del Rio T."/>
            <person name="Dalin E."/>
            <person name="Tice H."/>
            <person name="Pitluck S."/>
            <person name="Saunders E."/>
            <person name="Brettin T."/>
            <person name="Bruce D."/>
            <person name="Detter J.C."/>
            <person name="Han C."/>
            <person name="Schmutz J."/>
            <person name="Larimer F."/>
            <person name="Land M."/>
            <person name="Hauser L."/>
            <person name="Kyrpides N."/>
            <person name="Mikhailova N."/>
            <person name="Nelson K."/>
            <person name="Gogarten J.P."/>
            <person name="Noll K."/>
            <person name="Richardson P."/>
        </authorList>
    </citation>
    <scope>NUCLEOTIDE SEQUENCE [LARGE SCALE GENOMIC DNA]</scope>
    <source>
        <strain>ATCC 35602 / DSM 5306 / Rt17-B1</strain>
    </source>
</reference>
<dbReference type="EMBL" id="CP000771">
    <property type="protein sequence ID" value="ABS60353.1"/>
    <property type="molecule type" value="Genomic_DNA"/>
</dbReference>
<dbReference type="RefSeq" id="WP_011993673.1">
    <property type="nucleotide sequence ID" value="NC_009718.1"/>
</dbReference>
<dbReference type="SMR" id="A7HKC0"/>
<dbReference type="STRING" id="381764.Fnod_0489"/>
<dbReference type="KEGG" id="fno:Fnod_0489"/>
<dbReference type="eggNOG" id="COG0556">
    <property type="taxonomic scope" value="Bacteria"/>
</dbReference>
<dbReference type="HOGENOM" id="CLU_009621_2_1_0"/>
<dbReference type="OrthoDB" id="9806651at2"/>
<dbReference type="Proteomes" id="UP000002415">
    <property type="component" value="Chromosome"/>
</dbReference>
<dbReference type="GO" id="GO:0005737">
    <property type="term" value="C:cytoplasm"/>
    <property type="evidence" value="ECO:0007669"/>
    <property type="project" value="UniProtKB-SubCell"/>
</dbReference>
<dbReference type="GO" id="GO:0009380">
    <property type="term" value="C:excinuclease repair complex"/>
    <property type="evidence" value="ECO:0007669"/>
    <property type="project" value="InterPro"/>
</dbReference>
<dbReference type="GO" id="GO:0005524">
    <property type="term" value="F:ATP binding"/>
    <property type="evidence" value="ECO:0007669"/>
    <property type="project" value="UniProtKB-UniRule"/>
</dbReference>
<dbReference type="GO" id="GO:0016887">
    <property type="term" value="F:ATP hydrolysis activity"/>
    <property type="evidence" value="ECO:0007669"/>
    <property type="project" value="InterPro"/>
</dbReference>
<dbReference type="GO" id="GO:0003677">
    <property type="term" value="F:DNA binding"/>
    <property type="evidence" value="ECO:0007669"/>
    <property type="project" value="UniProtKB-UniRule"/>
</dbReference>
<dbReference type="GO" id="GO:0009381">
    <property type="term" value="F:excinuclease ABC activity"/>
    <property type="evidence" value="ECO:0007669"/>
    <property type="project" value="UniProtKB-UniRule"/>
</dbReference>
<dbReference type="GO" id="GO:0004386">
    <property type="term" value="F:helicase activity"/>
    <property type="evidence" value="ECO:0007669"/>
    <property type="project" value="UniProtKB-KW"/>
</dbReference>
<dbReference type="GO" id="GO:0006289">
    <property type="term" value="P:nucleotide-excision repair"/>
    <property type="evidence" value="ECO:0007669"/>
    <property type="project" value="UniProtKB-UniRule"/>
</dbReference>
<dbReference type="GO" id="GO:0009432">
    <property type="term" value="P:SOS response"/>
    <property type="evidence" value="ECO:0007669"/>
    <property type="project" value="UniProtKB-UniRule"/>
</dbReference>
<dbReference type="CDD" id="cd17916">
    <property type="entry name" value="DEXHc_UvrB"/>
    <property type="match status" value="1"/>
</dbReference>
<dbReference type="CDD" id="cd18790">
    <property type="entry name" value="SF2_C_UvrB"/>
    <property type="match status" value="1"/>
</dbReference>
<dbReference type="Gene3D" id="3.40.50.300">
    <property type="entry name" value="P-loop containing nucleotide triphosphate hydrolases"/>
    <property type="match status" value="3"/>
</dbReference>
<dbReference type="Gene3D" id="4.10.860.10">
    <property type="entry name" value="UVR domain"/>
    <property type="match status" value="1"/>
</dbReference>
<dbReference type="HAMAP" id="MF_00204">
    <property type="entry name" value="UvrB"/>
    <property type="match status" value="1"/>
</dbReference>
<dbReference type="InterPro" id="IPR006935">
    <property type="entry name" value="Helicase/UvrB_N"/>
</dbReference>
<dbReference type="InterPro" id="IPR014001">
    <property type="entry name" value="Helicase_ATP-bd"/>
</dbReference>
<dbReference type="InterPro" id="IPR001650">
    <property type="entry name" value="Helicase_C-like"/>
</dbReference>
<dbReference type="InterPro" id="IPR027417">
    <property type="entry name" value="P-loop_NTPase"/>
</dbReference>
<dbReference type="InterPro" id="IPR001943">
    <property type="entry name" value="UVR_dom"/>
</dbReference>
<dbReference type="InterPro" id="IPR036876">
    <property type="entry name" value="UVR_dom_sf"/>
</dbReference>
<dbReference type="InterPro" id="IPR004807">
    <property type="entry name" value="UvrB"/>
</dbReference>
<dbReference type="InterPro" id="IPR041471">
    <property type="entry name" value="UvrB_inter"/>
</dbReference>
<dbReference type="InterPro" id="IPR024759">
    <property type="entry name" value="UvrB_YAD/RRR_dom"/>
</dbReference>
<dbReference type="NCBIfam" id="NF003673">
    <property type="entry name" value="PRK05298.1"/>
    <property type="match status" value="1"/>
</dbReference>
<dbReference type="NCBIfam" id="TIGR00631">
    <property type="entry name" value="uvrb"/>
    <property type="match status" value="1"/>
</dbReference>
<dbReference type="PANTHER" id="PTHR24029">
    <property type="entry name" value="UVRABC SYSTEM PROTEIN B"/>
    <property type="match status" value="1"/>
</dbReference>
<dbReference type="PANTHER" id="PTHR24029:SF0">
    <property type="entry name" value="UVRABC SYSTEM PROTEIN B"/>
    <property type="match status" value="1"/>
</dbReference>
<dbReference type="Pfam" id="PF00271">
    <property type="entry name" value="Helicase_C"/>
    <property type="match status" value="1"/>
</dbReference>
<dbReference type="Pfam" id="PF04851">
    <property type="entry name" value="ResIII"/>
    <property type="match status" value="1"/>
</dbReference>
<dbReference type="Pfam" id="PF02151">
    <property type="entry name" value="UVR"/>
    <property type="match status" value="1"/>
</dbReference>
<dbReference type="Pfam" id="PF12344">
    <property type="entry name" value="UvrB"/>
    <property type="match status" value="1"/>
</dbReference>
<dbReference type="Pfam" id="PF17757">
    <property type="entry name" value="UvrB_inter"/>
    <property type="match status" value="1"/>
</dbReference>
<dbReference type="SMART" id="SM00487">
    <property type="entry name" value="DEXDc"/>
    <property type="match status" value="1"/>
</dbReference>
<dbReference type="SMART" id="SM00490">
    <property type="entry name" value="HELICc"/>
    <property type="match status" value="1"/>
</dbReference>
<dbReference type="SUPFAM" id="SSF46600">
    <property type="entry name" value="C-terminal UvrC-binding domain of UvrB"/>
    <property type="match status" value="1"/>
</dbReference>
<dbReference type="SUPFAM" id="SSF52540">
    <property type="entry name" value="P-loop containing nucleoside triphosphate hydrolases"/>
    <property type="match status" value="2"/>
</dbReference>
<dbReference type="PROSITE" id="PS51192">
    <property type="entry name" value="HELICASE_ATP_BIND_1"/>
    <property type="match status" value="1"/>
</dbReference>
<dbReference type="PROSITE" id="PS51194">
    <property type="entry name" value="HELICASE_CTER"/>
    <property type="match status" value="1"/>
</dbReference>
<dbReference type="PROSITE" id="PS50151">
    <property type="entry name" value="UVR"/>
    <property type="match status" value="1"/>
</dbReference>
<evidence type="ECO:0000255" key="1">
    <source>
        <dbReference type="HAMAP-Rule" id="MF_00204"/>
    </source>
</evidence>
<protein>
    <recommendedName>
        <fullName evidence="1">UvrABC system protein B</fullName>
        <shortName evidence="1">Protein UvrB</shortName>
    </recommendedName>
    <alternativeName>
        <fullName evidence="1">Excinuclease ABC subunit B</fullName>
    </alternativeName>
</protein>
<sequence>MPYELISDYEPMGDQPQAIESLVNGLNKGYRFQTLLGVTGSGKTFTMANVIKEVNRPVLIISPNKTLAAQLYSEFKAFFPNNKVEFFISYYDYYQPEAYVPTKDLYIEKSADINDVIARMRMSAIKSIMTRRDVIVVASVSAIYACGDPRDFDTLNIKLEVGQRINLSEFVKKLVKIGYERKEDIGLTGSFRLRGDTLEIFPSYQDEGIRIELFGDEIDRMYTFDRMNRDVIERLDRLTIYPTKEYVTTEEKIERAVKSIRAELDEQVKKLRSEGKELEAQRLWQRTMNDIELLSTLGYCTGIENYSRHFDGRQPGEPPYSLLDYYDEDFIVFIDESHITIPQLRAMYHGEMSRKKSLVEYGFRLPCAYDNRPLKFDEFMQKVNQVIFVSATPGPYELEVSEQVVEQIIRPTGLIDPQVEVRPTRYQVDDLVNEIVQVKKRGEKALVTVLTKKTAEMLAEYLVEFNIRALYLHSELDAIKRVEVLKKLRAGEIDVVVGVNLLREGLDLPEVSLVAILDADTEGFLRSETTLIQIIGRTARNENGKVIMYADRITPAMQRAIDETNRRRKIQMEYNEKHGIKPKTIIKPLMEDIFAPFRDKEEEMYKVYEDSILQMKESLSLEEYAALLEEEMYKAASELRYEDAARLRDELFKIKEELNRN</sequence>
<comment type="function">
    <text evidence="1">The UvrABC repair system catalyzes the recognition and processing of DNA lesions. A damage recognition complex composed of 2 UvrA and 2 UvrB subunits scans DNA for abnormalities. Upon binding of the UvrA(2)B(2) complex to a putative damaged site, the DNA wraps around one UvrB monomer. DNA wrap is dependent on ATP binding by UvrB and probably causes local melting of the DNA helix, facilitating insertion of UvrB beta-hairpin between the DNA strands. Then UvrB probes one DNA strand for the presence of a lesion. If a lesion is found the UvrA subunits dissociate and the UvrB-DNA preincision complex is formed. This complex is subsequently bound by UvrC and the second UvrB is released. If no lesion is found, the DNA wraps around the other UvrB subunit that will check the other stand for damage.</text>
</comment>
<comment type="subunit">
    <text evidence="1">Forms a heterotetramer with UvrA during the search for lesions. Interacts with UvrC in an incision complex.</text>
</comment>
<comment type="subcellular location">
    <subcellularLocation>
        <location evidence="1">Cytoplasm</location>
    </subcellularLocation>
</comment>
<comment type="domain">
    <text evidence="1">The beta-hairpin motif is involved in DNA binding.</text>
</comment>
<comment type="similarity">
    <text evidence="1">Belongs to the UvrB family.</text>
</comment>